<name>RNZ_BRADU</name>
<dbReference type="EC" id="3.1.26.11" evidence="1"/>
<dbReference type="EMBL" id="BA000040">
    <property type="protein sequence ID" value="BAC49147.1"/>
    <property type="molecule type" value="Genomic_DNA"/>
</dbReference>
<dbReference type="RefSeq" id="NP_770522.1">
    <property type="nucleotide sequence ID" value="NC_004463.1"/>
</dbReference>
<dbReference type="RefSeq" id="WP_011086661.1">
    <property type="nucleotide sequence ID" value="NC_004463.1"/>
</dbReference>
<dbReference type="SMR" id="Q89NF8"/>
<dbReference type="FunCoup" id="Q89NF8">
    <property type="interactions" value="441"/>
</dbReference>
<dbReference type="STRING" id="224911.AAV28_16415"/>
<dbReference type="EnsemblBacteria" id="BAC49147">
    <property type="protein sequence ID" value="BAC49147"/>
    <property type="gene ID" value="BAC49147"/>
</dbReference>
<dbReference type="GeneID" id="46490887"/>
<dbReference type="KEGG" id="bja:blr3882"/>
<dbReference type="PATRIC" id="fig|224911.44.peg.3569"/>
<dbReference type="eggNOG" id="COG1234">
    <property type="taxonomic scope" value="Bacteria"/>
</dbReference>
<dbReference type="HOGENOM" id="CLU_031317_2_1_5"/>
<dbReference type="InParanoid" id="Q89NF8"/>
<dbReference type="OrthoDB" id="9803916at2"/>
<dbReference type="PhylomeDB" id="Q89NF8"/>
<dbReference type="Proteomes" id="UP000002526">
    <property type="component" value="Chromosome"/>
</dbReference>
<dbReference type="GO" id="GO:0042781">
    <property type="term" value="F:3'-tRNA processing endoribonuclease activity"/>
    <property type="evidence" value="ECO:0000318"/>
    <property type="project" value="GO_Central"/>
</dbReference>
<dbReference type="GO" id="GO:0008270">
    <property type="term" value="F:zinc ion binding"/>
    <property type="evidence" value="ECO:0007669"/>
    <property type="project" value="UniProtKB-UniRule"/>
</dbReference>
<dbReference type="CDD" id="cd07717">
    <property type="entry name" value="RNaseZ_ZiPD-like_MBL-fold"/>
    <property type="match status" value="1"/>
</dbReference>
<dbReference type="FunFam" id="3.60.15.10:FF:000139">
    <property type="entry name" value="Ribonuclease Z"/>
    <property type="match status" value="1"/>
</dbReference>
<dbReference type="Gene3D" id="3.60.15.10">
    <property type="entry name" value="Ribonuclease Z/Hydroxyacylglutathione hydrolase-like"/>
    <property type="match status" value="1"/>
</dbReference>
<dbReference type="HAMAP" id="MF_01818">
    <property type="entry name" value="RNase_Z_BN"/>
    <property type="match status" value="1"/>
</dbReference>
<dbReference type="InterPro" id="IPR001279">
    <property type="entry name" value="Metallo-B-lactamas"/>
</dbReference>
<dbReference type="InterPro" id="IPR036866">
    <property type="entry name" value="RibonucZ/Hydroxyglut_hydro"/>
</dbReference>
<dbReference type="InterPro" id="IPR013471">
    <property type="entry name" value="RNase_Z/BN"/>
</dbReference>
<dbReference type="NCBIfam" id="NF000801">
    <property type="entry name" value="PRK00055.1-3"/>
    <property type="match status" value="1"/>
</dbReference>
<dbReference type="NCBIfam" id="TIGR02651">
    <property type="entry name" value="RNase_Z"/>
    <property type="match status" value="1"/>
</dbReference>
<dbReference type="PANTHER" id="PTHR46018:SF7">
    <property type="entry name" value="RIBONUCLEASE Z"/>
    <property type="match status" value="1"/>
</dbReference>
<dbReference type="PANTHER" id="PTHR46018">
    <property type="entry name" value="ZINC PHOSPHODIESTERASE ELAC PROTEIN 1"/>
    <property type="match status" value="1"/>
</dbReference>
<dbReference type="Pfam" id="PF12706">
    <property type="entry name" value="Lactamase_B_2"/>
    <property type="match status" value="2"/>
</dbReference>
<dbReference type="SMART" id="SM00849">
    <property type="entry name" value="Lactamase_B"/>
    <property type="match status" value="1"/>
</dbReference>
<dbReference type="SUPFAM" id="SSF56281">
    <property type="entry name" value="Metallo-hydrolase/oxidoreductase"/>
    <property type="match status" value="1"/>
</dbReference>
<gene>
    <name evidence="1" type="primary">rnz</name>
    <name type="ordered locus">blr3882</name>
</gene>
<protein>
    <recommendedName>
        <fullName evidence="1">Ribonuclease Z</fullName>
        <shortName evidence="1">RNase Z</shortName>
        <ecNumber evidence="1">3.1.26.11</ecNumber>
    </recommendedName>
    <alternativeName>
        <fullName evidence="1">tRNA 3 endonuclease</fullName>
    </alternativeName>
    <alternativeName>
        <fullName evidence="1">tRNase Z</fullName>
    </alternativeName>
</protein>
<comment type="function">
    <text evidence="1">Zinc phosphodiesterase, which displays some tRNA 3'-processing endonuclease activity. Probably involved in tRNA maturation, by removing a 3'-trailer from precursor tRNA.</text>
</comment>
<comment type="catalytic activity">
    <reaction evidence="1">
        <text>Endonucleolytic cleavage of RNA, removing extra 3' nucleotides from tRNA precursor, generating 3' termini of tRNAs. A 3'-hydroxy group is left at the tRNA terminus and a 5'-phosphoryl group is left at the trailer molecule.</text>
        <dbReference type="EC" id="3.1.26.11"/>
    </reaction>
</comment>
<comment type="cofactor">
    <cofactor evidence="1">
        <name>Zn(2+)</name>
        <dbReference type="ChEBI" id="CHEBI:29105"/>
    </cofactor>
    <text evidence="1">Binds 2 Zn(2+) ions.</text>
</comment>
<comment type="subunit">
    <text evidence="1">Homodimer.</text>
</comment>
<comment type="similarity">
    <text evidence="1">Belongs to the RNase Z family.</text>
</comment>
<feature type="chain" id="PRO_0000155853" description="Ribonuclease Z">
    <location>
        <begin position="1"/>
        <end position="301"/>
    </location>
</feature>
<feature type="active site" description="Proton acceptor" evidence="1">
    <location>
        <position position="65"/>
    </location>
</feature>
<feature type="binding site" evidence="1">
    <location>
        <position position="61"/>
    </location>
    <ligand>
        <name>Zn(2+)</name>
        <dbReference type="ChEBI" id="CHEBI:29105"/>
        <label>1</label>
        <note>catalytic</note>
    </ligand>
</feature>
<feature type="binding site" evidence="1">
    <location>
        <position position="63"/>
    </location>
    <ligand>
        <name>Zn(2+)</name>
        <dbReference type="ChEBI" id="CHEBI:29105"/>
        <label>1</label>
        <note>catalytic</note>
    </ligand>
</feature>
<feature type="binding site" evidence="1">
    <location>
        <position position="65"/>
    </location>
    <ligand>
        <name>Zn(2+)</name>
        <dbReference type="ChEBI" id="CHEBI:29105"/>
        <label>2</label>
        <note>catalytic</note>
    </ligand>
</feature>
<feature type="binding site" evidence="1">
    <location>
        <position position="66"/>
    </location>
    <ligand>
        <name>Zn(2+)</name>
        <dbReference type="ChEBI" id="CHEBI:29105"/>
        <label>2</label>
        <note>catalytic</note>
    </ligand>
</feature>
<feature type="binding site" evidence="1">
    <location>
        <position position="140"/>
    </location>
    <ligand>
        <name>Zn(2+)</name>
        <dbReference type="ChEBI" id="CHEBI:29105"/>
        <label>1</label>
        <note>catalytic</note>
    </ligand>
</feature>
<feature type="binding site" evidence="1">
    <location>
        <position position="211"/>
    </location>
    <ligand>
        <name>Zn(2+)</name>
        <dbReference type="ChEBI" id="CHEBI:29105"/>
        <label>1</label>
        <note>catalytic</note>
    </ligand>
</feature>
<feature type="binding site" evidence="1">
    <location>
        <position position="211"/>
    </location>
    <ligand>
        <name>Zn(2+)</name>
        <dbReference type="ChEBI" id="CHEBI:29105"/>
        <label>2</label>
        <note>catalytic</note>
    </ligand>
</feature>
<feature type="binding site" evidence="1">
    <location>
        <position position="269"/>
    </location>
    <ligand>
        <name>Zn(2+)</name>
        <dbReference type="ChEBI" id="CHEBI:29105"/>
        <label>2</label>
        <note>catalytic</note>
    </ligand>
</feature>
<keyword id="KW-0255">Endonuclease</keyword>
<keyword id="KW-0378">Hydrolase</keyword>
<keyword id="KW-0479">Metal-binding</keyword>
<keyword id="KW-0540">Nuclease</keyword>
<keyword id="KW-1185">Reference proteome</keyword>
<keyword id="KW-0819">tRNA processing</keyword>
<keyword id="KW-0862">Zinc</keyword>
<evidence type="ECO:0000255" key="1">
    <source>
        <dbReference type="HAMAP-Rule" id="MF_01818"/>
    </source>
</evidence>
<proteinExistence type="inferred from homology"/>
<accession>Q89NF8</accession>
<sequence>MFALTFLGTSASVPSAERNHPALLVEAAGKRILIDCGEGTQRQLLRSGAGFRRLDRILLTHAHLDHVLGIPGLFSTLGLRQSSDVMTIHGGPGTLDIVIRMLAGLWGAGRAPIPVEFAALSEGQVIDAGGFTIDCFPVRHRDTDSFGFVFQSPARRHLLPDRLASLGVPDGPLRGELAQGRPVVIEDGRTIDPEDVLGPATGGRKLVVIGDTETTEGLSQYVADADMLVIEATFLDRDASIARDYGHLTAAEAAAFAAANNVGQLVLTHMSGRYEDEEILAEAARIFPNSRIAADFDHIVV</sequence>
<organism>
    <name type="scientific">Bradyrhizobium diazoefficiens (strain JCM 10833 / BCRC 13528 / IAM 13628 / NBRC 14792 / USDA 110)</name>
    <dbReference type="NCBI Taxonomy" id="224911"/>
    <lineage>
        <taxon>Bacteria</taxon>
        <taxon>Pseudomonadati</taxon>
        <taxon>Pseudomonadota</taxon>
        <taxon>Alphaproteobacteria</taxon>
        <taxon>Hyphomicrobiales</taxon>
        <taxon>Nitrobacteraceae</taxon>
        <taxon>Bradyrhizobium</taxon>
    </lineage>
</organism>
<reference key="1">
    <citation type="journal article" date="2002" name="DNA Res.">
        <title>Complete genomic sequence of nitrogen-fixing symbiotic bacterium Bradyrhizobium japonicum USDA110.</title>
        <authorList>
            <person name="Kaneko T."/>
            <person name="Nakamura Y."/>
            <person name="Sato S."/>
            <person name="Minamisawa K."/>
            <person name="Uchiumi T."/>
            <person name="Sasamoto S."/>
            <person name="Watanabe A."/>
            <person name="Idesawa K."/>
            <person name="Iriguchi M."/>
            <person name="Kawashima K."/>
            <person name="Kohara M."/>
            <person name="Matsumoto M."/>
            <person name="Shimpo S."/>
            <person name="Tsuruoka H."/>
            <person name="Wada T."/>
            <person name="Yamada M."/>
            <person name="Tabata S."/>
        </authorList>
    </citation>
    <scope>NUCLEOTIDE SEQUENCE [LARGE SCALE GENOMIC DNA]</scope>
    <source>
        <strain>JCM 10833 / BCRC 13528 / IAM 13628 / NBRC 14792 / USDA 110</strain>
    </source>
</reference>